<proteinExistence type="evidence at transcript level"/>
<evidence type="ECO:0000250" key="1"/>
<evidence type="ECO:0000255" key="2"/>
<evidence type="ECO:0000305" key="3"/>
<sequence>MVRLVLIIFFVYTIILSIGSINCIDNNNLVTNQAALFVFGDSLFDAGNNNYINTVSSFRSNIWPYGQTNFKFPTGRLSDGPEKAWLPSIPPNLQPNNGNNQFTYGVSFASAGAGALAESFLGMVINLGTQLNNFKDVEKSLRSELGDAETKRVFSRAVYLFHIGANDYFYPFSANSSTFKSNSKEKFVDFVIGNITFVIEEVYKMGGRKFGFLNVGPYECSPNSLIRDRTKIGSCFKPVAELIDMHNKKFPDVLRRLQRQLSGFRYALHDYHTSLSERINSPSKYGFKEGKKACCGSGPLRGINTCGNRIGPSQGYGLCENVTDYLFYDSSHLTEKAHRQIAELIWNGPPNVTRPYNLKALFELRLT</sequence>
<dbReference type="EC" id="3.1.1.-"/>
<dbReference type="EMBL" id="AC006577">
    <property type="protein sequence ID" value="AAD25771.1"/>
    <property type="status" value="ALT_SEQ"/>
    <property type="molecule type" value="Genomic_DNA"/>
</dbReference>
<dbReference type="EMBL" id="CP002684">
    <property type="protein sequence ID" value="AEE33032.1"/>
    <property type="molecule type" value="Genomic_DNA"/>
</dbReference>
<dbReference type="PIR" id="D96580">
    <property type="entry name" value="D96580"/>
</dbReference>
<dbReference type="RefSeq" id="NP_175801.1">
    <property type="nucleotide sequence ID" value="NM_104276.1"/>
</dbReference>
<dbReference type="SMR" id="Q9SYF5"/>
<dbReference type="FunCoup" id="Q9SYF5">
    <property type="interactions" value="112"/>
</dbReference>
<dbReference type="STRING" id="3702.Q9SYF5"/>
<dbReference type="GlyCosmos" id="Q9SYF5">
    <property type="glycosylation" value="4 sites, No reported glycans"/>
</dbReference>
<dbReference type="GlyGen" id="Q9SYF5">
    <property type="glycosylation" value="4 sites"/>
</dbReference>
<dbReference type="PaxDb" id="3702-AT1G53990.1"/>
<dbReference type="EnsemblPlants" id="AT1G53990.1">
    <property type="protein sequence ID" value="AT1G53990.1"/>
    <property type="gene ID" value="AT1G53990"/>
</dbReference>
<dbReference type="GeneID" id="841837"/>
<dbReference type="Gramene" id="AT1G53990.1">
    <property type="protein sequence ID" value="AT1G53990.1"/>
    <property type="gene ID" value="AT1G53990"/>
</dbReference>
<dbReference type="KEGG" id="ath:AT1G53990"/>
<dbReference type="Araport" id="AT1G53990"/>
<dbReference type="TAIR" id="AT1G53990">
    <property type="gene designation" value="GLIP3"/>
</dbReference>
<dbReference type="eggNOG" id="ENOG502QQ4G">
    <property type="taxonomic scope" value="Eukaryota"/>
</dbReference>
<dbReference type="HOGENOM" id="CLU_015101_0_2_1"/>
<dbReference type="InParanoid" id="Q9SYF5"/>
<dbReference type="OMA" id="YPFSANS"/>
<dbReference type="PhylomeDB" id="Q9SYF5"/>
<dbReference type="BioCyc" id="ARA:AT1G53990-MONOMER"/>
<dbReference type="PRO" id="PR:Q9SYF5"/>
<dbReference type="Proteomes" id="UP000006548">
    <property type="component" value="Chromosome 1"/>
</dbReference>
<dbReference type="ExpressionAtlas" id="Q9SYF5">
    <property type="expression patterns" value="baseline and differential"/>
</dbReference>
<dbReference type="GO" id="GO:0005576">
    <property type="term" value="C:extracellular region"/>
    <property type="evidence" value="ECO:0007669"/>
    <property type="project" value="UniProtKB-SubCell"/>
</dbReference>
<dbReference type="GO" id="GO:0016298">
    <property type="term" value="F:lipase activity"/>
    <property type="evidence" value="ECO:0000250"/>
    <property type="project" value="TAIR"/>
</dbReference>
<dbReference type="GO" id="GO:0016042">
    <property type="term" value="P:lipid catabolic process"/>
    <property type="evidence" value="ECO:0007669"/>
    <property type="project" value="UniProtKB-KW"/>
</dbReference>
<dbReference type="CDD" id="cd01837">
    <property type="entry name" value="SGNH_plant_lipase_like"/>
    <property type="match status" value="1"/>
</dbReference>
<dbReference type="Gene3D" id="3.40.50.1110">
    <property type="entry name" value="SGNH hydrolase"/>
    <property type="match status" value="1"/>
</dbReference>
<dbReference type="InterPro" id="IPR001087">
    <property type="entry name" value="GDSL"/>
</dbReference>
<dbReference type="InterPro" id="IPR044552">
    <property type="entry name" value="GLIP1-5/GLL25"/>
</dbReference>
<dbReference type="InterPro" id="IPR008265">
    <property type="entry name" value="Lipase_GDSL_AS"/>
</dbReference>
<dbReference type="InterPro" id="IPR036514">
    <property type="entry name" value="SGNH_hydro_sf"/>
</dbReference>
<dbReference type="InterPro" id="IPR035669">
    <property type="entry name" value="SGNH_plant_lipase-like"/>
</dbReference>
<dbReference type="PANTHER" id="PTHR45966:SF33">
    <property type="entry name" value="GDSL ESTERASE_LIPASE 3"/>
    <property type="match status" value="1"/>
</dbReference>
<dbReference type="PANTHER" id="PTHR45966">
    <property type="entry name" value="GDSL-LIKE LIPASE/ACYLHYDROLASE"/>
    <property type="match status" value="1"/>
</dbReference>
<dbReference type="Pfam" id="PF00657">
    <property type="entry name" value="Lipase_GDSL"/>
    <property type="match status" value="1"/>
</dbReference>
<dbReference type="SUPFAM" id="SSF52266">
    <property type="entry name" value="SGNH hydrolase"/>
    <property type="match status" value="1"/>
</dbReference>
<dbReference type="PROSITE" id="PS01098">
    <property type="entry name" value="LIPASE_GDSL_SER"/>
    <property type="match status" value="1"/>
</dbReference>
<organism>
    <name type="scientific">Arabidopsis thaliana</name>
    <name type="common">Mouse-ear cress</name>
    <dbReference type="NCBI Taxonomy" id="3702"/>
    <lineage>
        <taxon>Eukaryota</taxon>
        <taxon>Viridiplantae</taxon>
        <taxon>Streptophyta</taxon>
        <taxon>Embryophyta</taxon>
        <taxon>Tracheophyta</taxon>
        <taxon>Spermatophyta</taxon>
        <taxon>Magnoliopsida</taxon>
        <taxon>eudicotyledons</taxon>
        <taxon>Gunneridae</taxon>
        <taxon>Pentapetalae</taxon>
        <taxon>rosids</taxon>
        <taxon>malvids</taxon>
        <taxon>Brassicales</taxon>
        <taxon>Brassicaceae</taxon>
        <taxon>Camelineae</taxon>
        <taxon>Arabidopsis</taxon>
    </lineage>
</organism>
<name>GLIP3_ARATH</name>
<accession>Q9SYF5</accession>
<protein>
    <recommendedName>
        <fullName>GDSL esterase/lipase 3</fullName>
        <ecNumber>3.1.1.-</ecNumber>
    </recommendedName>
    <alternativeName>
        <fullName>Extracellular lipase 3</fullName>
    </alternativeName>
</protein>
<comment type="subcellular location">
    <subcellularLocation>
        <location evidence="1">Secreted</location>
    </subcellularLocation>
</comment>
<comment type="similarity">
    <text evidence="3">Belongs to the 'GDSL' lipolytic enzyme family.</text>
</comment>
<comment type="sequence caution" evidence="3">
    <conflict type="erroneous gene model prediction">
        <sequence resource="EMBL-CDS" id="AAD25771"/>
    </conflict>
</comment>
<keyword id="KW-0325">Glycoprotein</keyword>
<keyword id="KW-0378">Hydrolase</keyword>
<keyword id="KW-0442">Lipid degradation</keyword>
<keyword id="KW-0443">Lipid metabolism</keyword>
<keyword id="KW-1185">Reference proteome</keyword>
<keyword id="KW-0964">Secreted</keyword>
<keyword id="KW-0732">Signal</keyword>
<gene>
    <name type="primary">GLIP3</name>
    <name type="ordered locus">At1g53990</name>
    <name type="ORF">F15I1.7</name>
</gene>
<reference key="1">
    <citation type="journal article" date="2000" name="Nature">
        <title>Sequence and analysis of chromosome 1 of the plant Arabidopsis thaliana.</title>
        <authorList>
            <person name="Theologis A."/>
            <person name="Ecker J.R."/>
            <person name="Palm C.J."/>
            <person name="Federspiel N.A."/>
            <person name="Kaul S."/>
            <person name="White O."/>
            <person name="Alonso J."/>
            <person name="Altafi H."/>
            <person name="Araujo R."/>
            <person name="Bowman C.L."/>
            <person name="Brooks S.Y."/>
            <person name="Buehler E."/>
            <person name="Chan A."/>
            <person name="Chao Q."/>
            <person name="Chen H."/>
            <person name="Cheuk R.F."/>
            <person name="Chin C.W."/>
            <person name="Chung M.K."/>
            <person name="Conn L."/>
            <person name="Conway A.B."/>
            <person name="Conway A.R."/>
            <person name="Creasy T.H."/>
            <person name="Dewar K."/>
            <person name="Dunn P."/>
            <person name="Etgu P."/>
            <person name="Feldblyum T.V."/>
            <person name="Feng J.-D."/>
            <person name="Fong B."/>
            <person name="Fujii C.Y."/>
            <person name="Gill J.E."/>
            <person name="Goldsmith A.D."/>
            <person name="Haas B."/>
            <person name="Hansen N.F."/>
            <person name="Hughes B."/>
            <person name="Huizar L."/>
            <person name="Hunter J.L."/>
            <person name="Jenkins J."/>
            <person name="Johnson-Hopson C."/>
            <person name="Khan S."/>
            <person name="Khaykin E."/>
            <person name="Kim C.J."/>
            <person name="Koo H.L."/>
            <person name="Kremenetskaia I."/>
            <person name="Kurtz D.B."/>
            <person name="Kwan A."/>
            <person name="Lam B."/>
            <person name="Langin-Hooper S."/>
            <person name="Lee A."/>
            <person name="Lee J.M."/>
            <person name="Lenz C.A."/>
            <person name="Li J.H."/>
            <person name="Li Y.-P."/>
            <person name="Lin X."/>
            <person name="Liu S.X."/>
            <person name="Liu Z.A."/>
            <person name="Luros J.S."/>
            <person name="Maiti R."/>
            <person name="Marziali A."/>
            <person name="Militscher J."/>
            <person name="Miranda M."/>
            <person name="Nguyen M."/>
            <person name="Nierman W.C."/>
            <person name="Osborne B.I."/>
            <person name="Pai G."/>
            <person name="Peterson J."/>
            <person name="Pham P.K."/>
            <person name="Rizzo M."/>
            <person name="Rooney T."/>
            <person name="Rowley D."/>
            <person name="Sakano H."/>
            <person name="Salzberg S.L."/>
            <person name="Schwartz J.R."/>
            <person name="Shinn P."/>
            <person name="Southwick A.M."/>
            <person name="Sun H."/>
            <person name="Tallon L.J."/>
            <person name="Tambunga G."/>
            <person name="Toriumi M.J."/>
            <person name="Town C.D."/>
            <person name="Utterback T."/>
            <person name="Van Aken S."/>
            <person name="Vaysberg M."/>
            <person name="Vysotskaia V.S."/>
            <person name="Walker M."/>
            <person name="Wu D."/>
            <person name="Yu G."/>
            <person name="Fraser C.M."/>
            <person name="Venter J.C."/>
            <person name="Davis R.W."/>
        </authorList>
    </citation>
    <scope>NUCLEOTIDE SEQUENCE [LARGE SCALE GENOMIC DNA]</scope>
    <source>
        <strain>cv. Columbia</strain>
    </source>
</reference>
<reference key="2">
    <citation type="journal article" date="2017" name="Plant J.">
        <title>Araport11: a complete reannotation of the Arabidopsis thaliana reference genome.</title>
        <authorList>
            <person name="Cheng C.Y."/>
            <person name="Krishnakumar V."/>
            <person name="Chan A.P."/>
            <person name="Thibaud-Nissen F."/>
            <person name="Schobel S."/>
            <person name="Town C.D."/>
        </authorList>
    </citation>
    <scope>GENOME REANNOTATION</scope>
    <source>
        <strain>cv. Columbia</strain>
    </source>
</reference>
<reference key="3">
    <citation type="journal article" date="2004" name="Prog. Lipid Res.">
        <title>GDSL family of serine esterases/lipases.</title>
        <authorList>
            <person name="Akoh C.C."/>
            <person name="Lee G.-C."/>
            <person name="Liaw Y.-C."/>
            <person name="Huang T.-H."/>
            <person name="Shaw J.-F."/>
        </authorList>
    </citation>
    <scope>REVIEW</scope>
</reference>
<reference key="4">
    <citation type="journal article" date="2005" name="Plant Cell">
        <title>Secretome analysis reveals an Arabidopsis lipase involved in defense against Alternaria brassicicola.</title>
        <authorList>
            <person name="Oh I.S."/>
            <person name="Park A.R."/>
            <person name="Bae M.S."/>
            <person name="Kwon S.J."/>
            <person name="Kim Y.S."/>
            <person name="Lee J.E."/>
            <person name="Kang N.Y."/>
            <person name="Lee S."/>
            <person name="Cheong H."/>
            <person name="Park O.K."/>
        </authorList>
    </citation>
    <scope>GENE FAMILY</scope>
</reference>
<reference key="5">
    <citation type="journal article" date="2008" name="Pak. J. Biol. Sci.">
        <title>Sequence analysis of GDSL lipase gene family in Arabidopsis thaliana.</title>
        <authorList>
            <person name="Ling H."/>
        </authorList>
    </citation>
    <scope>GENE FAMILY</scope>
</reference>
<feature type="signal peptide" evidence="2">
    <location>
        <begin position="1"/>
        <end position="23"/>
    </location>
</feature>
<feature type="chain" id="PRO_0000367336" description="GDSL esterase/lipase 3">
    <location>
        <begin position="24"/>
        <end position="367"/>
    </location>
</feature>
<feature type="active site" description="Nucleophile" evidence="1">
    <location>
        <position position="42"/>
    </location>
</feature>
<feature type="active site" evidence="1">
    <location>
        <position position="329"/>
    </location>
</feature>
<feature type="active site" evidence="1">
    <location>
        <position position="332"/>
    </location>
</feature>
<feature type="glycosylation site" description="N-linked (GlcNAc...) asparagine" evidence="2">
    <location>
        <position position="175"/>
    </location>
</feature>
<feature type="glycosylation site" description="N-linked (GlcNAc...) asparagine" evidence="2">
    <location>
        <position position="194"/>
    </location>
</feature>
<feature type="glycosylation site" description="N-linked (GlcNAc...) asparagine" evidence="2">
    <location>
        <position position="321"/>
    </location>
</feature>
<feature type="glycosylation site" description="N-linked (GlcNAc...) asparagine" evidence="2">
    <location>
        <position position="351"/>
    </location>
</feature>